<reference evidence="14" key="1">
    <citation type="journal article" date="2002" name="Nature">
        <title>Genome sequence of the human malaria parasite Plasmodium falciparum.</title>
        <authorList>
            <person name="Gardner M.J."/>
            <person name="Hall N."/>
            <person name="Fung E."/>
            <person name="White O."/>
            <person name="Berriman M."/>
            <person name="Hyman R.W."/>
            <person name="Carlton J.M."/>
            <person name="Pain A."/>
            <person name="Nelson K.E."/>
            <person name="Bowman S."/>
            <person name="Paulsen I.T."/>
            <person name="James K.D."/>
            <person name="Eisen J.A."/>
            <person name="Rutherford K.M."/>
            <person name="Salzberg S.L."/>
            <person name="Craig A."/>
            <person name="Kyes S."/>
            <person name="Chan M.-S."/>
            <person name="Nene V."/>
            <person name="Shallom S.J."/>
            <person name="Suh B."/>
            <person name="Peterson J."/>
            <person name="Angiuoli S."/>
            <person name="Pertea M."/>
            <person name="Allen J."/>
            <person name="Selengut J."/>
            <person name="Haft D."/>
            <person name="Mather M.W."/>
            <person name="Vaidya A.B."/>
            <person name="Martin D.M.A."/>
            <person name="Fairlamb A.H."/>
            <person name="Fraunholz M.J."/>
            <person name="Roos D.S."/>
            <person name="Ralph S.A."/>
            <person name="McFadden G.I."/>
            <person name="Cummings L.M."/>
            <person name="Subramanian G.M."/>
            <person name="Mungall C."/>
            <person name="Venter J.C."/>
            <person name="Carucci D.J."/>
            <person name="Hoffman S.L."/>
            <person name="Newbold C."/>
            <person name="Davis R.W."/>
            <person name="Fraser C.M."/>
            <person name="Barrell B.G."/>
        </authorList>
    </citation>
    <scope>NUCLEOTIDE SEQUENCE [LARGE SCALE GENOMIC DNA]</scope>
    <source>
        <strain evidence="14">3D7</strain>
    </source>
</reference>
<reference evidence="14" key="2">
    <citation type="journal article" date="2002" name="Nature">
        <title>Sequence of Plasmodium falciparum chromosomes 1, 3-9 and 13.</title>
        <authorList>
            <person name="Hall N."/>
            <person name="Pain A."/>
            <person name="Berriman M."/>
            <person name="Churcher C.M."/>
            <person name="Harris B."/>
            <person name="Harris D."/>
            <person name="Mungall K.L."/>
            <person name="Bowman S."/>
            <person name="Atkin R."/>
            <person name="Baker S."/>
            <person name="Barron A."/>
            <person name="Brooks K."/>
            <person name="Buckee C.O."/>
            <person name="Burrows C."/>
            <person name="Cherevach I."/>
            <person name="Chillingworth C."/>
            <person name="Chillingworth T."/>
            <person name="Christodoulou Z."/>
            <person name="Clark L."/>
            <person name="Clark R."/>
            <person name="Corton C."/>
            <person name="Cronin A."/>
            <person name="Davies R.M."/>
            <person name="Davis P."/>
            <person name="Dear P."/>
            <person name="Dearden F."/>
            <person name="Doggett J."/>
            <person name="Feltwell T."/>
            <person name="Goble A."/>
            <person name="Goodhead I."/>
            <person name="Gwilliam R."/>
            <person name="Hamlin N."/>
            <person name="Hance Z."/>
            <person name="Harper D."/>
            <person name="Hauser H."/>
            <person name="Hornsby T."/>
            <person name="Holroyd S."/>
            <person name="Horrocks P."/>
            <person name="Humphray S."/>
            <person name="Jagels K."/>
            <person name="James K.D."/>
            <person name="Johnson D."/>
            <person name="Kerhornou A."/>
            <person name="Knights A."/>
            <person name="Konfortov B."/>
            <person name="Kyes S."/>
            <person name="Larke N."/>
            <person name="Lawson D."/>
            <person name="Lennard N."/>
            <person name="Line A."/>
            <person name="Maddison M."/>
            <person name="Mclean J."/>
            <person name="Mooney P."/>
            <person name="Moule S."/>
            <person name="Murphy L."/>
            <person name="Oliver K."/>
            <person name="Ormond D."/>
            <person name="Price C."/>
            <person name="Quail M.A."/>
            <person name="Rabbinowitsch E."/>
            <person name="Rajandream M.A."/>
            <person name="Rutter S."/>
            <person name="Rutherford K.M."/>
            <person name="Sanders M."/>
            <person name="Simmonds M."/>
            <person name="Seeger K."/>
            <person name="Sharp S."/>
            <person name="Smith R."/>
            <person name="Squares R."/>
            <person name="Squares S."/>
            <person name="Stevens K."/>
            <person name="Taylor K."/>
            <person name="Tivey A."/>
            <person name="Unwin L."/>
            <person name="Whitehead S."/>
            <person name="Woodward J.R."/>
            <person name="Sulston J.E."/>
            <person name="Craig A."/>
            <person name="Newbold C."/>
            <person name="Barrell B.G."/>
        </authorList>
    </citation>
    <scope>NUCLEOTIDE SEQUENCE [LARGE SCALE GENOMIC DNA]</scope>
    <source>
        <strain evidence="14">3D7</strain>
    </source>
</reference>
<reference evidence="12" key="3">
    <citation type="journal article" date="1991" name="J. Cell Biol.">
        <title>A P-glycoprotein homologue of Plasmodium falciparum is localized on the digestive vacuole.</title>
        <authorList>
            <person name="Cowman A.F."/>
            <person name="Karcz S."/>
            <person name="Galatis D."/>
            <person name="Culvenor J.G."/>
        </authorList>
    </citation>
    <scope>SUBCELLULAR LOCATION</scope>
    <scope>DEVELOPMENTAL STAGE</scope>
</reference>
<reference evidence="12" key="4">
    <citation type="journal article" date="1993" name="Mol. Biochem. Parasitol.">
        <title>Nucleotide binding properties of a P-glycoprotein homologue from Plasmodium falciparum.</title>
        <authorList>
            <person name="Karcz S.R."/>
            <person name="Galatis D."/>
            <person name="Cowman A.F."/>
        </authorList>
    </citation>
    <scope>SUBCELLULAR LOCATION</scope>
</reference>
<reference evidence="12" key="5">
    <citation type="journal article" date="2022" name="PLoS Biol.">
        <title>Mechanistic basis for multidrug resistance and collateral drug sensitivity conferred to the malaria parasite by polymorphisms in PfMDR1 and PfCRT.</title>
        <authorList>
            <person name="Shafik S.H."/>
            <person name="Richards S.N."/>
            <person name="Corry B."/>
            <person name="Martin R.E."/>
        </authorList>
    </citation>
    <scope>FUNCTION</scope>
    <scope>CATALYTIC ACTIVITY</scope>
    <scope>BIOPHYSICOCHEMICAL PROPERTIES</scope>
    <scope>POLYMORPHISM</scope>
    <scope>MUTAGENESIS OF GLU-588 AND GLU-1337</scope>
</reference>
<reference evidence="15 16 17 18 19" key="6">
    <citation type="journal article" date="2023" name="Proc. Natl. Acad. Sci. U.S.A.">
        <title>The structure of &lt;i&gt;Plasmodium falciparum&lt;/i&gt; multidrug resistance protein 1 reveals an N-terminal regulatory domain.</title>
        <authorList>
            <person name="Si K."/>
            <person name="He X."/>
            <person name="Chen L."/>
            <person name="Zhang A."/>
            <person name="Guo C."/>
            <person name="Li M."/>
        </authorList>
    </citation>
    <scope>STRUCTURE BY ELECTRON MICROSCOPY (2.94 ANGSTROMS) OF 38-1419 IN COMPLEX WITH ATP; MAGNESIUM ION AND MEFLOQUINE</scope>
    <scope>FUNCTION</scope>
    <scope>CATALYTIC ACTIVITY</scope>
    <scope>BIOPHYSICOCHEMICAL PROPERTIES</scope>
    <scope>R DOMAIN</scope>
    <scope>MUTAGENESIS OF 1-MET--ASN-37; ASN-86; TYR-184; THR-199; LYS-217; LYS-220; LYS-221; PHE-331; GLU-588; SER-1034; ASN-1042; ASP-1246 AND GLU-1337</scope>
</reference>
<dbReference type="EC" id="7.6.2.2" evidence="7"/>
<dbReference type="EMBL" id="AL844504">
    <property type="protein sequence ID" value="CAD51594.1"/>
    <property type="molecule type" value="Genomic_DNA"/>
</dbReference>
<dbReference type="RefSeq" id="XP_001351787.1">
    <property type="nucleotide sequence ID" value="XM_001351751.1"/>
</dbReference>
<dbReference type="PDB" id="8JVH">
    <property type="method" value="EM"/>
    <property type="resolution" value="3.19 A"/>
    <property type="chains" value="A=1-1419"/>
</dbReference>
<dbReference type="PDB" id="8JW4">
    <property type="method" value="EM"/>
    <property type="resolution" value="3.13 A"/>
    <property type="chains" value="A=1-1419"/>
</dbReference>
<dbReference type="PDB" id="8JWF">
    <property type="method" value="EM"/>
    <property type="resolution" value="3.64 A"/>
    <property type="chains" value="A=1-1419"/>
</dbReference>
<dbReference type="PDB" id="8JWG">
    <property type="method" value="EM"/>
    <property type="resolution" value="3.54 A"/>
    <property type="chains" value="A=1-1419"/>
</dbReference>
<dbReference type="PDB" id="8JWI">
    <property type="method" value="EM"/>
    <property type="resolution" value="2.94 A"/>
    <property type="chains" value="A=38-1419"/>
</dbReference>
<dbReference type="PDBsum" id="8JVH"/>
<dbReference type="PDBsum" id="8JW4"/>
<dbReference type="PDBsum" id="8JWF"/>
<dbReference type="PDBsum" id="8JWG"/>
<dbReference type="PDBsum" id="8JWI"/>
<dbReference type="EMDB" id="EMD-36674"/>
<dbReference type="EMDB" id="EMD-36679"/>
<dbReference type="EMDB" id="EMD-36681"/>
<dbReference type="EMDB" id="EMD-36682"/>
<dbReference type="EMDB" id="EMD-36684"/>
<dbReference type="SMR" id="Q7K6A5"/>
<dbReference type="FunCoup" id="Q7K6A5">
    <property type="interactions" value="4"/>
</dbReference>
<dbReference type="STRING" id="36329.Q7K6A5"/>
<dbReference type="SwissPalm" id="Q7K6A5"/>
<dbReference type="PaxDb" id="5833-PFE1150w"/>
<dbReference type="EnsemblProtists" id="CAD51594">
    <property type="protein sequence ID" value="CAD51594"/>
    <property type="gene ID" value="PF3D7_0523000"/>
</dbReference>
<dbReference type="GeneID" id="813045"/>
<dbReference type="KEGG" id="pfa:PF3D7_0523000"/>
<dbReference type="VEuPathDB" id="PlasmoDB:PF3D7_0523000"/>
<dbReference type="HOGENOM" id="CLU_000604_17_2_1"/>
<dbReference type="InParanoid" id="Q7K6A5"/>
<dbReference type="OMA" id="GFGQEEQ"/>
<dbReference type="OrthoDB" id="6500128at2759"/>
<dbReference type="PhylomeDB" id="Q7K6A5"/>
<dbReference type="Reactome" id="R-PFA-159418">
    <property type="pathway name" value="Recycling of bile acids and salts"/>
</dbReference>
<dbReference type="Reactome" id="R-PFA-193368">
    <property type="pathway name" value="Synthesis of bile acids and bile salts via 7alpha-hydroxycholesterol"/>
</dbReference>
<dbReference type="Reactome" id="R-PFA-382556">
    <property type="pathway name" value="ABC-family proteins mediated transport"/>
</dbReference>
<dbReference type="Reactome" id="R-PFA-9754706">
    <property type="pathway name" value="Atorvastatin ADME"/>
</dbReference>
<dbReference type="Reactome" id="R-PFA-9757110">
    <property type="pathway name" value="Prednisone ADME"/>
</dbReference>
<dbReference type="Proteomes" id="UP000001450">
    <property type="component" value="Chromosome 5"/>
</dbReference>
<dbReference type="GO" id="GO:0020020">
    <property type="term" value="C:food vacuole"/>
    <property type="evidence" value="ECO:0000314"/>
    <property type="project" value="GeneDB"/>
</dbReference>
<dbReference type="GO" id="GO:0016020">
    <property type="term" value="C:membrane"/>
    <property type="evidence" value="ECO:0000318"/>
    <property type="project" value="GO_Central"/>
</dbReference>
<dbReference type="GO" id="GO:0005774">
    <property type="term" value="C:vacuolar membrane"/>
    <property type="evidence" value="ECO:0007669"/>
    <property type="project" value="UniProtKB-SubCell"/>
</dbReference>
<dbReference type="GO" id="GO:0140359">
    <property type="term" value="F:ABC-type transporter activity"/>
    <property type="evidence" value="ECO:0007669"/>
    <property type="project" value="InterPro"/>
</dbReference>
<dbReference type="GO" id="GO:0005524">
    <property type="term" value="F:ATP binding"/>
    <property type="evidence" value="ECO:0007669"/>
    <property type="project" value="UniProtKB-KW"/>
</dbReference>
<dbReference type="GO" id="GO:0016887">
    <property type="term" value="F:ATP hydrolysis activity"/>
    <property type="evidence" value="ECO:0007669"/>
    <property type="project" value="InterPro"/>
</dbReference>
<dbReference type="GO" id="GO:0042626">
    <property type="term" value="F:ATPase-coupled transmembrane transporter activity"/>
    <property type="evidence" value="ECO:0000318"/>
    <property type="project" value="GO_Central"/>
</dbReference>
<dbReference type="GO" id="GO:0046872">
    <property type="term" value="F:metal ion binding"/>
    <property type="evidence" value="ECO:0007669"/>
    <property type="project" value="UniProtKB-KW"/>
</dbReference>
<dbReference type="GO" id="GO:0055085">
    <property type="term" value="P:transmembrane transport"/>
    <property type="evidence" value="ECO:0000318"/>
    <property type="project" value="GO_Central"/>
</dbReference>
<dbReference type="CDD" id="cd18577">
    <property type="entry name" value="ABC_6TM_Pgp_ABCB1_D1_like"/>
    <property type="match status" value="1"/>
</dbReference>
<dbReference type="CDD" id="cd18578">
    <property type="entry name" value="ABC_6TM_Pgp_ABCB1_D2_like"/>
    <property type="match status" value="1"/>
</dbReference>
<dbReference type="CDD" id="cd03249">
    <property type="entry name" value="ABC_MTABC3_MDL1_MDL2"/>
    <property type="match status" value="1"/>
</dbReference>
<dbReference type="FunFam" id="3.40.50.300:FF:000604">
    <property type="entry name" value="ABC transporter B family member 28"/>
    <property type="match status" value="1"/>
</dbReference>
<dbReference type="FunFam" id="1.20.1560.10:FF:000108">
    <property type="entry name" value="Multidrug resistance protein"/>
    <property type="match status" value="1"/>
</dbReference>
<dbReference type="Gene3D" id="1.20.1560.10">
    <property type="entry name" value="ABC transporter type 1, transmembrane domain"/>
    <property type="match status" value="2"/>
</dbReference>
<dbReference type="Gene3D" id="3.40.50.300">
    <property type="entry name" value="P-loop containing nucleotide triphosphate hydrolases"/>
    <property type="match status" value="2"/>
</dbReference>
<dbReference type="InterPro" id="IPR003593">
    <property type="entry name" value="AAA+_ATPase"/>
</dbReference>
<dbReference type="InterPro" id="IPR011527">
    <property type="entry name" value="ABC1_TM_dom"/>
</dbReference>
<dbReference type="InterPro" id="IPR036640">
    <property type="entry name" value="ABC1_TM_sf"/>
</dbReference>
<dbReference type="InterPro" id="IPR003439">
    <property type="entry name" value="ABC_transporter-like_ATP-bd"/>
</dbReference>
<dbReference type="InterPro" id="IPR017871">
    <property type="entry name" value="ABC_transporter-like_CS"/>
</dbReference>
<dbReference type="InterPro" id="IPR027417">
    <property type="entry name" value="P-loop_NTPase"/>
</dbReference>
<dbReference type="InterPro" id="IPR039421">
    <property type="entry name" value="Type_1_exporter"/>
</dbReference>
<dbReference type="PANTHER" id="PTHR43394">
    <property type="entry name" value="ATP-DEPENDENT PERMEASE MDL1, MITOCHONDRIAL"/>
    <property type="match status" value="1"/>
</dbReference>
<dbReference type="PANTHER" id="PTHR43394:SF27">
    <property type="entry name" value="ATP-DEPENDENT TRANSLOCASE ABCB1-LIKE"/>
    <property type="match status" value="1"/>
</dbReference>
<dbReference type="Pfam" id="PF00664">
    <property type="entry name" value="ABC_membrane"/>
    <property type="match status" value="2"/>
</dbReference>
<dbReference type="Pfam" id="PF00005">
    <property type="entry name" value="ABC_tran"/>
    <property type="match status" value="3"/>
</dbReference>
<dbReference type="SMART" id="SM00382">
    <property type="entry name" value="AAA"/>
    <property type="match status" value="2"/>
</dbReference>
<dbReference type="SUPFAM" id="SSF90123">
    <property type="entry name" value="ABC transporter transmembrane region"/>
    <property type="match status" value="2"/>
</dbReference>
<dbReference type="SUPFAM" id="SSF52540">
    <property type="entry name" value="P-loop containing nucleoside triphosphate hydrolases"/>
    <property type="match status" value="2"/>
</dbReference>
<dbReference type="PROSITE" id="PS50929">
    <property type="entry name" value="ABC_TM1F"/>
    <property type="match status" value="2"/>
</dbReference>
<dbReference type="PROSITE" id="PS00211">
    <property type="entry name" value="ABC_TRANSPORTER_1"/>
    <property type="match status" value="2"/>
</dbReference>
<dbReference type="PROSITE" id="PS50893">
    <property type="entry name" value="ABC_TRANSPORTER_2"/>
    <property type="match status" value="2"/>
</dbReference>
<accession>Q7K6A5</accession>
<feature type="chain" id="PRO_0000461861" description="Multidrug resistance protein 1">
    <location>
        <begin position="1"/>
        <end position="1419"/>
    </location>
</feature>
<feature type="topological domain" description="Cytoplasmic" evidence="12">
    <location>
        <begin position="1"/>
        <end position="60"/>
    </location>
</feature>
<feature type="transmembrane region" description="Helical" evidence="3">
    <location>
        <begin position="61"/>
        <end position="81"/>
    </location>
</feature>
<feature type="topological domain" description="Vacuolar" evidence="12">
    <location>
        <begin position="82"/>
        <end position="90"/>
    </location>
</feature>
<feature type="transmembrane region" description="Helical" evidence="3">
    <location>
        <begin position="91"/>
        <end position="111"/>
    </location>
</feature>
<feature type="topological domain" description="Cytoplasmic" evidence="12">
    <location>
        <begin position="112"/>
        <end position="168"/>
    </location>
</feature>
<feature type="transmembrane region" description="Helical" evidence="3">
    <location>
        <begin position="169"/>
        <end position="189"/>
    </location>
</feature>
<feature type="topological domain" description="Vacuolar" evidence="12">
    <location>
        <begin position="190"/>
        <end position="191"/>
    </location>
</feature>
<feature type="transmembrane region" description="Helical" evidence="3">
    <location>
        <begin position="192"/>
        <end position="212"/>
    </location>
</feature>
<feature type="topological domain" description="Cytoplasmic" evidence="12">
    <location>
        <begin position="213"/>
        <end position="275"/>
    </location>
</feature>
<feature type="transmembrane region" description="Helical" evidence="3">
    <location>
        <begin position="276"/>
        <end position="296"/>
    </location>
</feature>
<feature type="topological domain" description="Vacuolar" evidence="12">
    <location>
        <begin position="297"/>
        <end position="316"/>
    </location>
</feature>
<feature type="transmembrane region" description="Helical" evidence="3">
    <location>
        <begin position="317"/>
        <end position="337"/>
    </location>
</feature>
<feature type="topological domain" description="Cytoplasmic" evidence="12">
    <location>
        <begin position="338"/>
        <end position="788"/>
    </location>
</feature>
<feature type="transmembrane region" description="Helical" evidence="3">
    <location>
        <begin position="789"/>
        <end position="809"/>
    </location>
</feature>
<feature type="topological domain" description="Vacuolar" evidence="12">
    <location>
        <begin position="810"/>
        <end position="829"/>
    </location>
</feature>
<feature type="transmembrane region" description="Helical" evidence="3">
    <location>
        <begin position="830"/>
        <end position="850"/>
    </location>
</feature>
<feature type="topological domain" description="Cytoplasmic" evidence="12">
    <location>
        <begin position="851"/>
        <end position="907"/>
    </location>
</feature>
<feature type="transmembrane region" description="Helical" evidence="3">
    <location>
        <begin position="908"/>
        <end position="928"/>
    </location>
</feature>
<feature type="transmembrane region" description="Helical" evidence="3">
    <location>
        <begin position="929"/>
        <end position="949"/>
    </location>
</feature>
<feature type="topological domain" description="Cytoplasmic" evidence="12">
    <location>
        <begin position="950"/>
        <end position="1032"/>
    </location>
</feature>
<feature type="transmembrane region" description="Helical" evidence="3">
    <location>
        <begin position="1033"/>
        <end position="1053"/>
    </location>
</feature>
<feature type="topological domain" description="Vacuolar" evidence="12">
    <location>
        <begin position="1054"/>
        <end position="1057"/>
    </location>
</feature>
<feature type="transmembrane region" description="Helical" evidence="3">
    <location>
        <begin position="1058"/>
        <end position="1078"/>
    </location>
</feature>
<feature type="topological domain" description="Cytoplasmic" evidence="12">
    <location>
        <begin position="1079"/>
        <end position="1419"/>
    </location>
</feature>
<feature type="domain" description="ABC transmembrane type-1 1" evidence="3">
    <location>
        <begin position="58"/>
        <end position="345"/>
    </location>
</feature>
<feature type="domain" description="ABC transporter 1" evidence="2">
    <location>
        <begin position="378"/>
        <end position="662"/>
    </location>
</feature>
<feature type="domain" description="ABC transmembrane type-1 2" evidence="3">
    <location>
        <begin position="791"/>
        <end position="1083"/>
    </location>
</feature>
<feature type="domain" description="ABC transporter 2" evidence="2">
    <location>
        <begin position="1126"/>
        <end position="1416"/>
    </location>
</feature>
<feature type="region of interest" description="R domain; regulates transporter activity" evidence="7">
    <location>
        <begin position="1"/>
        <end position="37"/>
    </location>
</feature>
<feature type="region of interest" description="Disordered" evidence="4">
    <location>
        <begin position="639"/>
        <end position="665"/>
    </location>
</feature>
<feature type="region of interest" description="Disordered" evidence="4">
    <location>
        <begin position="697"/>
        <end position="752"/>
    </location>
</feature>
<feature type="compositionally biased region" description="Low complexity" evidence="4">
    <location>
        <begin position="643"/>
        <end position="665"/>
    </location>
</feature>
<feature type="compositionally biased region" description="Low complexity" evidence="4">
    <location>
        <begin position="697"/>
        <end position="715"/>
    </location>
</feature>
<feature type="compositionally biased region" description="Polar residues" evidence="4">
    <location>
        <begin position="723"/>
        <end position="749"/>
    </location>
</feature>
<feature type="binding site" evidence="7 19">
    <location>
        <position position="387"/>
    </location>
    <ligand>
        <name>ATP</name>
        <dbReference type="ChEBI" id="CHEBI:30616"/>
        <label>1</label>
    </ligand>
</feature>
<feature type="binding site" evidence="7 19">
    <location>
        <position position="389"/>
    </location>
    <ligand>
        <name>ATP</name>
        <dbReference type="ChEBI" id="CHEBI:30616"/>
        <label>1</label>
    </ligand>
</feature>
<feature type="binding site" evidence="7 19">
    <location>
        <position position="390"/>
    </location>
    <ligand>
        <name>ATP</name>
        <dbReference type="ChEBI" id="CHEBI:30616"/>
        <label>1</label>
    </ligand>
</feature>
<feature type="binding site" evidence="7 19">
    <location>
        <position position="415"/>
    </location>
    <ligand>
        <name>ATP</name>
        <dbReference type="ChEBI" id="CHEBI:30616"/>
        <label>1</label>
    </ligand>
</feature>
<feature type="binding site" evidence="7 19">
    <location>
        <position position="417"/>
    </location>
    <ligand>
        <name>ATP</name>
        <dbReference type="ChEBI" id="CHEBI:30616"/>
        <label>1</label>
    </ligand>
</feature>
<feature type="binding site" evidence="7 19">
    <location>
        <position position="418"/>
    </location>
    <ligand>
        <name>ATP</name>
        <dbReference type="ChEBI" id="CHEBI:30616"/>
        <label>1</label>
    </ligand>
</feature>
<feature type="binding site" evidence="7 19">
    <location>
        <position position="419"/>
    </location>
    <ligand>
        <name>ATP</name>
        <dbReference type="ChEBI" id="CHEBI:30616"/>
        <label>1</label>
    </ligand>
</feature>
<feature type="binding site" evidence="7 19">
    <location>
        <position position="420"/>
    </location>
    <ligand>
        <name>ATP</name>
        <dbReference type="ChEBI" id="CHEBI:30616"/>
        <label>1</label>
    </ligand>
</feature>
<feature type="binding site" evidence="7 19">
    <location>
        <position position="421"/>
    </location>
    <ligand>
        <name>ATP</name>
        <dbReference type="ChEBI" id="CHEBI:30616"/>
        <label>1</label>
    </ligand>
</feature>
<feature type="binding site" evidence="7 19">
    <location>
        <position position="462"/>
    </location>
    <ligand>
        <name>ATP</name>
        <dbReference type="ChEBI" id="CHEBI:30616"/>
        <label>1</label>
    </ligand>
</feature>
<feature type="binding site" evidence="7 19">
    <location>
        <position position="462"/>
    </location>
    <ligand>
        <name>Mg(2+)</name>
        <dbReference type="ChEBI" id="CHEBI:18420"/>
        <label>1</label>
    </ligand>
</feature>
<feature type="binding site" evidence="7 19">
    <location>
        <position position="562"/>
    </location>
    <ligand>
        <name>ATP</name>
        <dbReference type="ChEBI" id="CHEBI:30616"/>
        <label>2</label>
    </ligand>
</feature>
<feature type="binding site" evidence="7 19">
    <location>
        <position position="564"/>
    </location>
    <ligand>
        <name>ATP</name>
        <dbReference type="ChEBI" id="CHEBI:30616"/>
        <label>2</label>
    </ligand>
</feature>
<feature type="binding site" evidence="7 19">
    <location>
        <position position="566"/>
    </location>
    <ligand>
        <name>ATP</name>
        <dbReference type="ChEBI" id="CHEBI:30616"/>
        <label>2</label>
    </ligand>
</feature>
<feature type="binding site" evidence="7 19">
    <location>
        <position position="567"/>
    </location>
    <ligand>
        <name>ATP</name>
        <dbReference type="ChEBI" id="CHEBI:30616"/>
        <label>2</label>
    </ligand>
</feature>
<feature type="binding site" evidence="7 19">
    <location>
        <position position="1135"/>
    </location>
    <ligand>
        <name>ATP</name>
        <dbReference type="ChEBI" id="CHEBI:30616"/>
        <label>2</label>
    </ligand>
</feature>
<feature type="binding site" evidence="7 19">
    <location>
        <position position="1138"/>
    </location>
    <ligand>
        <name>ATP</name>
        <dbReference type="ChEBI" id="CHEBI:30616"/>
        <label>2</label>
    </ligand>
</feature>
<feature type="binding site" evidence="7 19">
    <location>
        <position position="1163"/>
    </location>
    <ligand>
        <name>ATP</name>
        <dbReference type="ChEBI" id="CHEBI:30616"/>
        <label>2</label>
    </ligand>
</feature>
<feature type="binding site" evidence="7 19">
    <location>
        <position position="1164"/>
    </location>
    <ligand>
        <name>ATP</name>
        <dbReference type="ChEBI" id="CHEBI:30616"/>
        <label>2</label>
    </ligand>
</feature>
<feature type="binding site" evidence="7 19">
    <location>
        <position position="1166"/>
    </location>
    <ligand>
        <name>ATP</name>
        <dbReference type="ChEBI" id="CHEBI:30616"/>
        <label>2</label>
    </ligand>
</feature>
<feature type="binding site" evidence="7 19">
    <location>
        <position position="1167"/>
    </location>
    <ligand>
        <name>ATP</name>
        <dbReference type="ChEBI" id="CHEBI:30616"/>
        <label>2</label>
    </ligand>
</feature>
<feature type="binding site" evidence="7 19">
    <location>
        <position position="1168"/>
    </location>
    <ligand>
        <name>ATP</name>
        <dbReference type="ChEBI" id="CHEBI:30616"/>
        <label>2</label>
    </ligand>
</feature>
<feature type="binding site" evidence="7 19">
    <location>
        <position position="1168"/>
    </location>
    <ligand>
        <name>Mg(2+)</name>
        <dbReference type="ChEBI" id="CHEBI:18420"/>
        <label>2</label>
    </ligand>
</feature>
<feature type="binding site" evidence="7 19">
    <location>
        <position position="1169"/>
    </location>
    <ligand>
        <name>ATP</name>
        <dbReference type="ChEBI" id="CHEBI:30616"/>
        <label>2</label>
    </ligand>
</feature>
<feature type="binding site" evidence="7 19">
    <location>
        <position position="1256"/>
    </location>
    <ligand>
        <name>ATP</name>
        <dbReference type="ChEBI" id="CHEBI:30616"/>
        <label>2</label>
    </ligand>
</feature>
<feature type="binding site" evidence="7 19">
    <location>
        <position position="1256"/>
    </location>
    <ligand>
        <name>Mg(2+)</name>
        <dbReference type="ChEBI" id="CHEBI:18420"/>
        <label>2</label>
    </ligand>
</feature>
<feature type="binding site" evidence="7 19">
    <location>
        <position position="1312"/>
    </location>
    <ligand>
        <name>ATP</name>
        <dbReference type="ChEBI" id="CHEBI:30616"/>
        <label>1</label>
    </ligand>
</feature>
<feature type="binding site" evidence="7 19">
    <location>
        <position position="1313"/>
    </location>
    <ligand>
        <name>ATP</name>
        <dbReference type="ChEBI" id="CHEBI:30616"/>
        <label>1</label>
    </ligand>
</feature>
<feature type="binding site" evidence="7 19">
    <location>
        <position position="1315"/>
    </location>
    <ligand>
        <name>ATP</name>
        <dbReference type="ChEBI" id="CHEBI:30616"/>
        <label>1</label>
    </ligand>
</feature>
<feature type="binding site" evidence="7 19">
    <location>
        <position position="1316"/>
    </location>
    <ligand>
        <name>ATP</name>
        <dbReference type="ChEBI" id="CHEBI:30616"/>
        <label>1</label>
    </ligand>
</feature>
<feature type="site" description="Important for mefloquine and halofantrine binding" evidence="7">
    <location>
        <position position="331"/>
    </location>
</feature>
<feature type="mutagenesis site" description="Results in 80% higher ATPase activity." evidence="7">
    <location>
        <begin position="1"/>
        <end position="37"/>
    </location>
</feature>
<feature type="mutagenesis site" description="Decreases ATPase activity." evidence="7">
    <original>N</original>
    <variation>Y</variation>
    <location>
        <position position="86"/>
    </location>
</feature>
<feature type="mutagenesis site" description="Increases ATPase activity." evidence="7">
    <original>Y</original>
    <variation>F</variation>
    <location>
        <position position="184"/>
    </location>
</feature>
<feature type="mutagenesis site" description="Increases ATPase activity." evidence="7">
    <original>T</original>
    <variation>A</variation>
    <location>
        <position position="199"/>
    </location>
</feature>
<feature type="mutagenesis site" description="Significantly increases ATPase activity; when associated with Q-220 and Q-221." evidence="7">
    <original>K</original>
    <variation>Q</variation>
    <location>
        <position position="217"/>
    </location>
</feature>
<feature type="mutagenesis site" description="Significantly increases ATPase activity; when associated with Q-217 and Q-221." evidence="7">
    <original>K</original>
    <variation>Q</variation>
    <location>
        <position position="220"/>
    </location>
</feature>
<feature type="mutagenesis site" description="Significantly increases ATPase activity; when associated with Q-217 and Q-220." evidence="7">
    <original>K</original>
    <variation>Q</variation>
    <location>
        <position position="221"/>
    </location>
</feature>
<feature type="mutagenesis site" description="Results in less ATPase activity when stimulated with mefloquine or halofantrine, indicating the role of the residue in mefloquine and halofantrine binding." evidence="7">
    <original>F</original>
    <variation>A</variation>
    <location>
        <position position="331"/>
    </location>
</feature>
<feature type="mutagenesis site" description="Abolishes ATPase activity and xenobiotic transport; when associated with Q-1337." evidence="6 7">
    <original>E</original>
    <variation>Q</variation>
    <location>
        <position position="588"/>
    </location>
</feature>
<feature type="mutagenesis site" description="Decreases ATPase activity." evidence="7">
    <original>S</original>
    <variation>C</variation>
    <location>
        <position position="1034"/>
    </location>
</feature>
<feature type="mutagenesis site" description="Decreases ATPase activity." evidence="7">
    <original>N</original>
    <variation>D</variation>
    <location>
        <position position="1042"/>
    </location>
</feature>
<feature type="mutagenesis site" description="Decreases ATPase activity." evidence="7">
    <original>D</original>
    <variation>Y</variation>
    <location>
        <position position="1246"/>
    </location>
</feature>
<feature type="mutagenesis site" description="Abolishes ATPase activity and xenobiotic transport; when associated with Q-588." evidence="6 7">
    <original>E</original>
    <variation>Q</variation>
    <location>
        <position position="1337"/>
    </location>
</feature>
<sequence length="1419" mass="162252">MGKEQKEKKDGNLSIKEEVEKELNKKSTAELFRKIKNEKISFFLPFKCLPAQHRKLLFISFVCAVLSGGTLPFFISVFGVILKNMNLGDDINPIILSLVSIGLVQFILSMISSYCMDVITSKILKTLKLEYLRSVFYQDGQFHDNNPGSKLRSDLDFYLEQVSSGIGTKFITIFTYASSFLGLYIWSLIKNARLTLCITCVFPLIYVCGVICNKKVKLNKKTSLLYNNNTMSIIEEALMGIRTVASYCGEKTILNKFNLSETFYSKYILKANFVEALHIGLINGLILVSYAFGFWYGTRIIINSATNQYPNNDFNGASVISILLGVLISMFMLTIILPNITEYMKALEATNSLYEIINRKPLVENNDDGETLPNIKKIEFKNVRFHYDTRKDVEIYKDLSFTLKEGKTYAFVGESGCGKSTILKLIERLYDPTEGDIIVNDSHNLKDINLKWWRSKIGVVSQDPLLFSNSIKNNIKYSLYSLKDLEAMENYYEENTNDTYENKNFSLISNSMTSNELLEMKKEYQTIKDSDVVDVSKKVLIHDFVSSLPDKYDTLVGSNASKLSGGQKQRISIARAIMRNPKILILDEATSSLDNKSEYLVQKTINNLKGNENRITIIIAHRLSTIRYANTIFVLSNRERSDNNNNNNNDDNNNNNNNNNNKINNEGSYIIEQGTHDSLMKNKNGIYHLMINNQKISSNKSSNNGNDNGSDNKSSAYKDSDTGNDADNMNSLSIHENENISNNRNCKNTAENEKEEKVPFFKRMFRRKKKAPNNLRIIYKEIFSYKKDVTIIFFSILVAGGLYPVFALLYARYVSTLFDFANLEYNSNKYSIYILLIAIAMFISETLKNYYNNKIGEKVEKTMKRRLFENILYQEMSFFDQDKNTPGVLSAHINRDVHLLKTGLVNNIVIFSHFIMLFLVSMVMSFYFCPIVAAVLTFIYFINMRVFAVRARLTKSKEIEKKENMSSGVFAFSSDDEMFKDPSFLIQEAFYNMHTVINYGLEDYFCNLIEKAIDYKNKGQKRRIIVNAALWGFSQSAQLFINSFAYWFGSFLIKRGTILVDDFMKSLFTFIFTGSYAGKLMSLKGDSENAKLSFEKYYPLMIRKSNIDVRDDGGIRINKNLIKGKVDIKDVNFRYISRPNVPIYKNLSFTCDSKKTTAIVGETGSGKSTFMNLLLRFYDLKNDHIILKNDMTNFQDYQNNNNNSLVLKNVNEFSNQSGSAEDYTVFNNNGEILLDDINICDYNLRDLRNLFSIVSQEPMLFNMSIYENIKFGREDATLEDVKRVSKFAAIDEFIESLPNKYDTNVGPYGKSLSGGQKQRIAIARALLREPKILLLDEATSSLDSNSEKLIEKTIVDIKDKADKTIITIAHRIASIKRSDKIVVFNNPDRNGTFVQSHGTHDELLSAQDGIYKKYVKLAK</sequence>
<organism evidence="14">
    <name type="scientific">Plasmodium falciparum (isolate 3D7)</name>
    <dbReference type="NCBI Taxonomy" id="36329"/>
    <lineage>
        <taxon>Eukaryota</taxon>
        <taxon>Sar</taxon>
        <taxon>Alveolata</taxon>
        <taxon>Apicomplexa</taxon>
        <taxon>Aconoidasida</taxon>
        <taxon>Haemosporida</taxon>
        <taxon>Plasmodiidae</taxon>
        <taxon>Plasmodium</taxon>
        <taxon>Plasmodium (Laverania)</taxon>
    </lineage>
</organism>
<proteinExistence type="evidence at protein level"/>
<comment type="function">
    <text evidence="6 7">Energy-dependent efflux pump responsible for decreased drug accumulation in multidrug-resistant cells (PubMed:35507548, PubMed:37527341). Transports lumefantrine, mefloquine, chloroquine, quinine, quinidine, amodiaquine, piperaquine, dihydroartemisinin and quinacrine (PubMed:35507548).</text>
</comment>
<comment type="catalytic activity">
    <reaction evidence="6 7">
        <text>ATP + H2O + xenobioticSide 1 = ADP + phosphate + xenobioticSide 2.</text>
        <dbReference type="EC" id="7.6.2.2"/>
    </reaction>
</comment>
<comment type="biophysicochemical properties">
    <kinetics>
        <KM evidence="7">0.33 mM for ATP</KM>
        <KM evidence="6">21.9 uM for lumefantrine</KM>
        <KM evidence="6">20.1 uM for mefloquine</KM>
        <KM evidence="6">27.2 uM for chloroquine</KM>
        <KM evidence="6">19.1 uM for quinine</KM>
        <Vmax evidence="7">198.3 nmol/min/mg enzyme toward ATP</Vmax>
    </kinetics>
</comment>
<comment type="subcellular location">
    <subcellularLocation>
        <location evidence="5 8">Vacuole membrane</location>
        <topology evidence="1">Multi-pass membrane protein</topology>
    </subcellularLocation>
</comment>
<comment type="developmental stage">
    <text evidence="5">Expressed throughout the erythrocytic asexual life cycle with increasing amount at mature stages (at protein level) (PubMed:1674943). Detected in gametocyte stages (at protein level) (PubMed:1674943).</text>
</comment>
<comment type="polymorphism">
    <text evidence="6">Protein variants from field strains differ significantly in their capacities for antimalarial drug transport in vitro: variants prevalent in chloroquine-resistant isolates exhibit reduced capacities for chloroquine, lumefantrine and mefloquine transport (PubMed:35507548). Transporter from 7G8 strain shows significantly lower levels of transport activity for lumefantrine, mefloquine, chloroquine, quinine, quinidine, amodiaquine, piperaquine, dihydroartemisinin and quinacrine compared to 3D7 strain (PubMed:35507548). Reduced transporter activity for lumefantrine, mefloquine, chloroquine, quinine, quinidine, amodiaquine, piperaquine, dihydroartemisinin and quinacrine is observed for the proteins from Dd2 and GB4 isolates (PubMed:35507548). Increased transporter activity for quinine and quinidine and reduced activity for lumefantrine, mefloquine, chloroquine, amodiaquine, piperaquine, dihydroartemisinin and quinacrine is observed for HB3 strain transporter compared to 3D7 strain (PubMed:35507548). Strong positive correlation between lumefantrine and mefloquine transport rates by the protein and parasite drug resistance indices for these antimalarials is observed (PubMed:35507548). Strong negative correlation between chloroquine transport rates by the protein and parasite drug resistance indices for this antimalarial is observed (PubMed:35507548). No correlation between quinine transport rates by the protein and parasite drug resistance indices for this antimalarial is observed (PubMed:35507548).</text>
</comment>
<comment type="miscellaneous">
    <text evidence="6">Can transport human ABCB1 substrates rhodamine B and vinblastine (PubMed:35507548). Does not transport amantadine (PubMed:35507548).</text>
</comment>
<comment type="similarity">
    <text evidence="12">Belongs to the ABC transporter superfamily. ABCB family. Multidrug resistance exporter (TC 3.A.1.201) subfamily.</text>
</comment>
<evidence type="ECO:0000255" key="1"/>
<evidence type="ECO:0000255" key="2">
    <source>
        <dbReference type="PROSITE-ProRule" id="PRU00434"/>
    </source>
</evidence>
<evidence type="ECO:0000255" key="3">
    <source>
        <dbReference type="PROSITE-ProRule" id="PRU00441"/>
    </source>
</evidence>
<evidence type="ECO:0000256" key="4">
    <source>
        <dbReference type="SAM" id="MobiDB-lite"/>
    </source>
</evidence>
<evidence type="ECO:0000269" key="5">
    <source>
    </source>
</evidence>
<evidence type="ECO:0000269" key="6">
    <source>
    </source>
</evidence>
<evidence type="ECO:0000269" key="7">
    <source>
    </source>
</evidence>
<evidence type="ECO:0000269" key="8">
    <source>
    </source>
</evidence>
<evidence type="ECO:0000303" key="9">
    <source>
    </source>
</evidence>
<evidence type="ECO:0000303" key="10">
    <source>
    </source>
</evidence>
<evidence type="ECO:0000303" key="11">
    <source>
    </source>
</evidence>
<evidence type="ECO:0000305" key="12"/>
<evidence type="ECO:0000312" key="13">
    <source>
        <dbReference type="EMBL" id="CAD51594.1"/>
    </source>
</evidence>
<evidence type="ECO:0000312" key="14">
    <source>
        <dbReference type="Proteomes" id="UP000001450"/>
    </source>
</evidence>
<evidence type="ECO:0007744" key="15">
    <source>
        <dbReference type="PDB" id="8JVH"/>
    </source>
</evidence>
<evidence type="ECO:0007744" key="16">
    <source>
        <dbReference type="PDB" id="8JW4"/>
    </source>
</evidence>
<evidence type="ECO:0007744" key="17">
    <source>
        <dbReference type="PDB" id="8JWF"/>
    </source>
</evidence>
<evidence type="ECO:0007744" key="18">
    <source>
        <dbReference type="PDB" id="8JWG"/>
    </source>
</evidence>
<evidence type="ECO:0007744" key="19">
    <source>
        <dbReference type="PDB" id="8JWI"/>
    </source>
</evidence>
<keyword id="KW-0002">3D-structure</keyword>
<keyword id="KW-0067">ATP-binding</keyword>
<keyword id="KW-0378">Hydrolase</keyword>
<keyword id="KW-0460">Magnesium</keyword>
<keyword id="KW-0472">Membrane</keyword>
<keyword id="KW-0479">Metal-binding</keyword>
<keyword id="KW-0547">Nucleotide-binding</keyword>
<keyword id="KW-1185">Reference proteome</keyword>
<keyword id="KW-1278">Translocase</keyword>
<keyword id="KW-0812">Transmembrane</keyword>
<keyword id="KW-1133">Transmembrane helix</keyword>
<keyword id="KW-0813">Transport</keyword>
<keyword id="KW-0926">Vacuole</keyword>
<gene>
    <name evidence="13" type="ORF">PF3D7_0523000</name>
</gene>
<protein>
    <recommendedName>
        <fullName evidence="9 10">Multidrug resistance protein 1</fullName>
        <shortName evidence="9 10">PfMDR1</shortName>
        <ecNumber evidence="7">7.6.2.2</ecNumber>
    </recommendedName>
    <alternativeName>
        <fullName evidence="9 11">P-glycoprotein homolog</fullName>
        <shortName evidence="9 11">PGH1</shortName>
    </alternativeName>
</protein>
<name>MDR_PLAF7</name>